<reference key="1">
    <citation type="journal article" date="2006" name="Proc. Natl. Acad. Sci. U.S.A.">
        <title>The complete genome of Rhodococcus sp. RHA1 provides insights into a catabolic powerhouse.</title>
        <authorList>
            <person name="McLeod M.P."/>
            <person name="Warren R.L."/>
            <person name="Hsiao W.W.L."/>
            <person name="Araki N."/>
            <person name="Myhre M."/>
            <person name="Fernandes C."/>
            <person name="Miyazawa D."/>
            <person name="Wong W."/>
            <person name="Lillquist A.L."/>
            <person name="Wang D."/>
            <person name="Dosanjh M."/>
            <person name="Hara H."/>
            <person name="Petrescu A."/>
            <person name="Morin R.D."/>
            <person name="Yang G."/>
            <person name="Stott J.M."/>
            <person name="Schein J.E."/>
            <person name="Shin H."/>
            <person name="Smailus D."/>
            <person name="Siddiqui A.S."/>
            <person name="Marra M.A."/>
            <person name="Jones S.J.M."/>
            <person name="Holt R."/>
            <person name="Brinkman F.S.L."/>
            <person name="Miyauchi K."/>
            <person name="Fukuda M."/>
            <person name="Davies J.E."/>
            <person name="Mohn W.W."/>
            <person name="Eltis L.D."/>
        </authorList>
    </citation>
    <scope>NUCLEOTIDE SEQUENCE [LARGE SCALE GENOMIC DNA]</scope>
    <source>
        <strain>RHA1</strain>
    </source>
</reference>
<proteinExistence type="inferred from homology"/>
<dbReference type="EC" id="5.99.-.-" evidence="1"/>
<dbReference type="EMBL" id="CP000431">
    <property type="protein sequence ID" value="ABG97432.1"/>
    <property type="molecule type" value="Genomic_DNA"/>
</dbReference>
<dbReference type="RefSeq" id="WP_009478909.1">
    <property type="nucleotide sequence ID" value="NC_008268.1"/>
</dbReference>
<dbReference type="SMR" id="Q0S4V4"/>
<dbReference type="KEGG" id="rha:RHA1_ro05653"/>
<dbReference type="eggNOG" id="COG4044">
    <property type="taxonomic scope" value="Bacteria"/>
</dbReference>
<dbReference type="HOGENOM" id="CLU_085483_1_1_11"/>
<dbReference type="OrthoDB" id="4804006at2"/>
<dbReference type="Proteomes" id="UP000008710">
    <property type="component" value="Chromosome"/>
</dbReference>
<dbReference type="GO" id="GO:0020037">
    <property type="term" value="F:heme binding"/>
    <property type="evidence" value="ECO:0007669"/>
    <property type="project" value="UniProtKB-UniRule"/>
</dbReference>
<dbReference type="GO" id="GO:0046872">
    <property type="term" value="F:metal ion binding"/>
    <property type="evidence" value="ECO:0007669"/>
    <property type="project" value="UniProtKB-KW"/>
</dbReference>
<dbReference type="GO" id="GO:0062213">
    <property type="term" value="F:peroxynitrite isomerase activity"/>
    <property type="evidence" value="ECO:0007669"/>
    <property type="project" value="UniProtKB-UniRule"/>
</dbReference>
<dbReference type="CDD" id="cd07828">
    <property type="entry name" value="lipocalin_heme-bd-THAP4-like"/>
    <property type="match status" value="1"/>
</dbReference>
<dbReference type="Gene3D" id="2.40.128.20">
    <property type="match status" value="1"/>
</dbReference>
<dbReference type="HAMAP" id="MF_01297">
    <property type="entry name" value="nitrobindin"/>
    <property type="match status" value="1"/>
</dbReference>
<dbReference type="InterPro" id="IPR012674">
    <property type="entry name" value="Calycin"/>
</dbReference>
<dbReference type="InterPro" id="IPR022939">
    <property type="entry name" value="Nb(III)_bact/plant"/>
</dbReference>
<dbReference type="InterPro" id="IPR045165">
    <property type="entry name" value="Nitrobindin"/>
</dbReference>
<dbReference type="InterPro" id="IPR014878">
    <property type="entry name" value="THAP4-like_heme-bd"/>
</dbReference>
<dbReference type="PANTHER" id="PTHR15854:SF4">
    <property type="entry name" value="PEROXYNITRITE ISOMERASE THAP4"/>
    <property type="match status" value="1"/>
</dbReference>
<dbReference type="PANTHER" id="PTHR15854">
    <property type="entry name" value="THAP4 PROTEIN"/>
    <property type="match status" value="1"/>
</dbReference>
<dbReference type="Pfam" id="PF08768">
    <property type="entry name" value="THAP4_heme-bd"/>
    <property type="match status" value="1"/>
</dbReference>
<dbReference type="SUPFAM" id="SSF50814">
    <property type="entry name" value="Lipocalins"/>
    <property type="match status" value="1"/>
</dbReference>
<protein>
    <recommendedName>
        <fullName>Peroxynitrite isomerase 1</fullName>
        <ecNumber evidence="1">5.99.-.-</ecNumber>
    </recommendedName>
    <alternativeName>
        <fullName>Ferric nitrobindin</fullName>
        <shortName>Nb(III)</shortName>
    </alternativeName>
</protein>
<evidence type="ECO:0000255" key="1">
    <source>
        <dbReference type="HAMAP-Rule" id="MF_01297"/>
    </source>
</evidence>
<evidence type="ECO:0000256" key="2">
    <source>
        <dbReference type="SAM" id="MobiDB-lite"/>
    </source>
</evidence>
<gene>
    <name type="ordered locus">RHA1_ro05653</name>
</gene>
<organism>
    <name type="scientific">Rhodococcus jostii (strain RHA1)</name>
    <dbReference type="NCBI Taxonomy" id="101510"/>
    <lineage>
        <taxon>Bacteria</taxon>
        <taxon>Bacillati</taxon>
        <taxon>Actinomycetota</taxon>
        <taxon>Actinomycetes</taxon>
        <taxon>Mycobacteriales</taxon>
        <taxon>Nocardiaceae</taxon>
        <taxon>Rhodococcus</taxon>
    </lineage>
</organism>
<comment type="function">
    <text evidence="1">Heme-binding protein able to scavenge peroxynitrite and to protect free L-tyrosine against peroxynitrite-mediated nitration, by acting as a peroxynitrite isomerase that converts peroxynitrite to nitrate. Therefore, this protein likely plays a role in peroxynitrite sensing and in the detoxification of reactive nitrogen and oxygen species (RNS and ROS, respectively). Is able to bind nitric oxide (NO) in vitro, but may act as a sensor of peroxynitrite levels in vivo.</text>
</comment>
<comment type="catalytic activity">
    <reaction evidence="1">
        <text>peroxynitrite = nitrate</text>
        <dbReference type="Rhea" id="RHEA:63116"/>
        <dbReference type="ChEBI" id="CHEBI:17632"/>
        <dbReference type="ChEBI" id="CHEBI:25941"/>
    </reaction>
    <physiologicalReaction direction="left-to-right" evidence="1">
        <dbReference type="Rhea" id="RHEA:63117"/>
    </physiologicalReaction>
</comment>
<comment type="cofactor">
    <cofactor evidence="1">
        <name>heme b</name>
        <dbReference type="ChEBI" id="CHEBI:60344"/>
    </cofactor>
    <text evidence="1">Binds 1 heme b group per subunit, that coordinates a highly solvent-exposed Fe(III) atom.</text>
</comment>
<comment type="pathway">
    <text evidence="1">Nitrogen metabolism.</text>
</comment>
<comment type="subunit">
    <text evidence="1">Homodimer.</text>
</comment>
<comment type="domain">
    <text evidence="1">Forms a 10-stranded antiparallel beta-barrel structure able to accommodate a hydrophobic ligand in its interior. In fact, this fold hosts the heme group, which is located in a wide surface cleft.</text>
</comment>
<comment type="similarity">
    <text evidence="1">Belongs to the nitrobindin family.</text>
</comment>
<name>NB1_RHOJR</name>
<sequence>MDENSTLSPAHSDAAASSSANTPPLPYVPSALAPFAGLWRGEGEGAYPTIDDFAYTEEIEFAPTGKPFLAYRSRTREAGSGRPLHSESGFLRLVGEDEAELLVAQPTGFTEIHRGQVREGTIELSMVVLSASPDAKPVHSIRRQLSVRGGDLTYDLWMAHDLTPLTHHLHGHLRRD</sequence>
<keyword id="KW-0349">Heme</keyword>
<keyword id="KW-0408">Iron</keyword>
<keyword id="KW-0413">Isomerase</keyword>
<keyword id="KW-0479">Metal-binding</keyword>
<feature type="chain" id="PRO_0000356946" description="Peroxynitrite isomerase 1">
    <location>
        <begin position="1"/>
        <end position="176"/>
    </location>
</feature>
<feature type="region of interest" description="Disordered" evidence="2">
    <location>
        <begin position="1"/>
        <end position="23"/>
    </location>
</feature>
<feature type="short sequence motif" description="GXWXGXG" evidence="1">
    <location>
        <begin position="37"/>
        <end position="43"/>
    </location>
</feature>
<feature type="compositionally biased region" description="Low complexity" evidence="2">
    <location>
        <begin position="8"/>
        <end position="20"/>
    </location>
</feature>
<feature type="binding site" description="axial binding residue" evidence="1">
    <location>
        <position position="168"/>
    </location>
    <ligand>
        <name>heme b</name>
        <dbReference type="ChEBI" id="CHEBI:60344"/>
    </ligand>
    <ligandPart>
        <name>Fe</name>
        <dbReference type="ChEBI" id="CHEBI:18248"/>
    </ligandPart>
</feature>
<accession>Q0S4V4</accession>